<accession>Q2JVW2</accession>
<gene>
    <name evidence="1" type="primary">rsmA</name>
    <name evidence="1" type="synonym">ksgA</name>
    <name type="ordered locus">CYA_0917</name>
</gene>
<name>RSMA_SYNJA</name>
<reference key="1">
    <citation type="journal article" date="2007" name="ISME J.">
        <title>Population level functional diversity in a microbial community revealed by comparative genomic and metagenomic analyses.</title>
        <authorList>
            <person name="Bhaya D."/>
            <person name="Grossman A.R."/>
            <person name="Steunou A.-S."/>
            <person name="Khuri N."/>
            <person name="Cohan F.M."/>
            <person name="Hamamura N."/>
            <person name="Melendrez M.C."/>
            <person name="Bateson M.M."/>
            <person name="Ward D.M."/>
            <person name="Heidelberg J.F."/>
        </authorList>
    </citation>
    <scope>NUCLEOTIDE SEQUENCE [LARGE SCALE GENOMIC DNA]</scope>
    <source>
        <strain>JA-3-3Ab</strain>
    </source>
</reference>
<feature type="chain" id="PRO_0000257363" description="Ribosomal RNA small subunit methyltransferase A">
    <location>
        <begin position="1"/>
        <end position="279"/>
    </location>
</feature>
<feature type="binding site" evidence="1">
    <location>
        <position position="11"/>
    </location>
    <ligand>
        <name>S-adenosyl-L-methionine</name>
        <dbReference type="ChEBI" id="CHEBI:59789"/>
    </ligand>
</feature>
<feature type="binding site" evidence="1">
    <location>
        <position position="13"/>
    </location>
    <ligand>
        <name>S-adenosyl-L-methionine</name>
        <dbReference type="ChEBI" id="CHEBI:59789"/>
    </ligand>
</feature>
<feature type="binding site" evidence="1">
    <location>
        <position position="42"/>
    </location>
    <ligand>
        <name>S-adenosyl-L-methionine</name>
        <dbReference type="ChEBI" id="CHEBI:59789"/>
    </ligand>
</feature>
<feature type="binding site" evidence="1">
    <location>
        <position position="63"/>
    </location>
    <ligand>
        <name>S-adenosyl-L-methionine</name>
        <dbReference type="ChEBI" id="CHEBI:59789"/>
    </ligand>
</feature>
<feature type="binding site" evidence="1">
    <location>
        <position position="88"/>
    </location>
    <ligand>
        <name>S-adenosyl-L-methionine</name>
        <dbReference type="ChEBI" id="CHEBI:59789"/>
    </ligand>
</feature>
<feature type="binding site" evidence="1">
    <location>
        <position position="104"/>
    </location>
    <ligand>
        <name>S-adenosyl-L-methionine</name>
        <dbReference type="ChEBI" id="CHEBI:59789"/>
    </ligand>
</feature>
<comment type="function">
    <text evidence="1">Specifically dimethylates two adjacent adenosines (A1518 and A1519) in the loop of a conserved hairpin near the 3'-end of 16S rRNA in the 30S particle. May play a critical role in biogenesis of 30S subunits.</text>
</comment>
<comment type="catalytic activity">
    <reaction evidence="1">
        <text>adenosine(1518)/adenosine(1519) in 16S rRNA + 4 S-adenosyl-L-methionine = N(6)-dimethyladenosine(1518)/N(6)-dimethyladenosine(1519) in 16S rRNA + 4 S-adenosyl-L-homocysteine + 4 H(+)</text>
        <dbReference type="Rhea" id="RHEA:19609"/>
        <dbReference type="Rhea" id="RHEA-COMP:10232"/>
        <dbReference type="Rhea" id="RHEA-COMP:10233"/>
        <dbReference type="ChEBI" id="CHEBI:15378"/>
        <dbReference type="ChEBI" id="CHEBI:57856"/>
        <dbReference type="ChEBI" id="CHEBI:59789"/>
        <dbReference type="ChEBI" id="CHEBI:74411"/>
        <dbReference type="ChEBI" id="CHEBI:74493"/>
        <dbReference type="EC" id="2.1.1.182"/>
    </reaction>
</comment>
<comment type="subcellular location">
    <subcellularLocation>
        <location evidence="1">Cytoplasm</location>
    </subcellularLocation>
</comment>
<comment type="similarity">
    <text evidence="1">Belongs to the class I-like SAM-binding methyltransferase superfamily. rRNA adenine N(6)-methyltransferase family. RsmA subfamily.</text>
</comment>
<organism>
    <name type="scientific">Synechococcus sp. (strain JA-3-3Ab)</name>
    <name type="common">Cyanobacteria bacterium Yellowstone A-Prime</name>
    <dbReference type="NCBI Taxonomy" id="321327"/>
    <lineage>
        <taxon>Bacteria</taxon>
        <taxon>Bacillati</taxon>
        <taxon>Cyanobacteriota</taxon>
        <taxon>Cyanophyceae</taxon>
        <taxon>Synechococcales</taxon>
        <taxon>Synechococcaceae</taxon>
        <taxon>Synechococcus</taxon>
    </lineage>
</organism>
<keyword id="KW-0963">Cytoplasm</keyword>
<keyword id="KW-0489">Methyltransferase</keyword>
<keyword id="KW-0694">RNA-binding</keyword>
<keyword id="KW-0698">rRNA processing</keyword>
<keyword id="KW-0949">S-adenosyl-L-methionine</keyword>
<keyword id="KW-0808">Transferase</keyword>
<evidence type="ECO:0000255" key="1">
    <source>
        <dbReference type="HAMAP-Rule" id="MF_00607"/>
    </source>
</evidence>
<protein>
    <recommendedName>
        <fullName evidence="1">Ribosomal RNA small subunit methyltransferase A</fullName>
        <ecNumber evidence="1">2.1.1.182</ecNumber>
    </recommendedName>
    <alternativeName>
        <fullName evidence="1">16S rRNA (adenine(1518)-N(6)/adenine(1519)-N(6))-dimethyltransferase</fullName>
    </alternativeName>
    <alternativeName>
        <fullName evidence="1">16S rRNA dimethyladenosine transferase</fullName>
    </alternativeName>
    <alternativeName>
        <fullName evidence="1">16S rRNA dimethylase</fullName>
    </alternativeName>
    <alternativeName>
        <fullName evidence="1">S-adenosylmethionine-6-N', N'-adenosyl(rRNA) dimethyltransferase</fullName>
    </alternativeName>
</protein>
<dbReference type="EC" id="2.1.1.182" evidence="1"/>
<dbReference type="EMBL" id="CP000239">
    <property type="protein sequence ID" value="ABC99119.1"/>
    <property type="molecule type" value="Genomic_DNA"/>
</dbReference>
<dbReference type="RefSeq" id="WP_011429802.1">
    <property type="nucleotide sequence ID" value="NC_007775.1"/>
</dbReference>
<dbReference type="SMR" id="Q2JVW2"/>
<dbReference type="STRING" id="321327.CYA_0917"/>
<dbReference type="KEGG" id="cya:CYA_0917"/>
<dbReference type="eggNOG" id="COG0030">
    <property type="taxonomic scope" value="Bacteria"/>
</dbReference>
<dbReference type="HOGENOM" id="CLU_041220_0_1_3"/>
<dbReference type="OrthoDB" id="9814755at2"/>
<dbReference type="Proteomes" id="UP000008818">
    <property type="component" value="Chromosome"/>
</dbReference>
<dbReference type="GO" id="GO:0005829">
    <property type="term" value="C:cytosol"/>
    <property type="evidence" value="ECO:0007669"/>
    <property type="project" value="TreeGrafter"/>
</dbReference>
<dbReference type="GO" id="GO:0052908">
    <property type="term" value="F:16S rRNA (adenine(1518)-N(6)/adenine(1519)-N(6))-dimethyltransferase activity"/>
    <property type="evidence" value="ECO:0007669"/>
    <property type="project" value="UniProtKB-EC"/>
</dbReference>
<dbReference type="GO" id="GO:0003723">
    <property type="term" value="F:RNA binding"/>
    <property type="evidence" value="ECO:0007669"/>
    <property type="project" value="UniProtKB-KW"/>
</dbReference>
<dbReference type="CDD" id="cd02440">
    <property type="entry name" value="AdoMet_MTases"/>
    <property type="match status" value="1"/>
</dbReference>
<dbReference type="Gene3D" id="1.10.8.100">
    <property type="entry name" value="Ribosomal RNA adenine dimethylase-like, domain 2"/>
    <property type="match status" value="1"/>
</dbReference>
<dbReference type="Gene3D" id="3.40.50.150">
    <property type="entry name" value="Vaccinia Virus protein VP39"/>
    <property type="match status" value="1"/>
</dbReference>
<dbReference type="HAMAP" id="MF_00607">
    <property type="entry name" value="16SrRNA_methyltr_A"/>
    <property type="match status" value="1"/>
</dbReference>
<dbReference type="InterPro" id="IPR001737">
    <property type="entry name" value="KsgA/Erm"/>
</dbReference>
<dbReference type="InterPro" id="IPR023165">
    <property type="entry name" value="rRNA_Ade_diMease-like_C"/>
</dbReference>
<dbReference type="InterPro" id="IPR020596">
    <property type="entry name" value="rRNA_Ade_Mease_Trfase_CS"/>
</dbReference>
<dbReference type="InterPro" id="IPR020598">
    <property type="entry name" value="rRNA_Ade_methylase_Trfase_N"/>
</dbReference>
<dbReference type="InterPro" id="IPR011530">
    <property type="entry name" value="rRNA_adenine_dimethylase"/>
</dbReference>
<dbReference type="InterPro" id="IPR029063">
    <property type="entry name" value="SAM-dependent_MTases_sf"/>
</dbReference>
<dbReference type="NCBIfam" id="TIGR00755">
    <property type="entry name" value="ksgA"/>
    <property type="match status" value="1"/>
</dbReference>
<dbReference type="PANTHER" id="PTHR11727">
    <property type="entry name" value="DIMETHYLADENOSINE TRANSFERASE"/>
    <property type="match status" value="1"/>
</dbReference>
<dbReference type="PANTHER" id="PTHR11727:SF7">
    <property type="entry name" value="DIMETHYLADENOSINE TRANSFERASE-RELATED"/>
    <property type="match status" value="1"/>
</dbReference>
<dbReference type="Pfam" id="PF00398">
    <property type="entry name" value="RrnaAD"/>
    <property type="match status" value="1"/>
</dbReference>
<dbReference type="SMART" id="SM00650">
    <property type="entry name" value="rADc"/>
    <property type="match status" value="1"/>
</dbReference>
<dbReference type="SUPFAM" id="SSF53335">
    <property type="entry name" value="S-adenosyl-L-methionine-dependent methyltransferases"/>
    <property type="match status" value="1"/>
</dbReference>
<dbReference type="PROSITE" id="PS01131">
    <property type="entry name" value="RRNA_A_DIMETH"/>
    <property type="match status" value="1"/>
</dbReference>
<dbReference type="PROSITE" id="PS51689">
    <property type="entry name" value="SAM_RNA_A_N6_MT"/>
    <property type="match status" value="1"/>
</dbReference>
<sequence>MPYPRKRFGQHWLKDPAVHEAIVRAAQLPPPQRDPAWVLEIGPGTGQLTQRLLAQGVHVVAVEIDRDLCRLLQKRFADQPRFHLVEGDFLRLPLPPQPRLLVANIPYNLTGPILEKVLGSPAQPVRQFERIVLMVQKELAERLQAGPGSKAYGALSVRVRYLAECELICRVPPSAFRPPPQVESAVVRLTPRPAPTPARDPRWFSQLVCQGFSARRKQLVNALGGLVDRQTVAAALAQLRLSPTARAEELDLPDWLALSDLLLEQTPRMAAVSGEGKPR</sequence>
<proteinExistence type="inferred from homology"/>